<sequence>MGASTFSQSFAEKYEAWASVMLPALVGFAFLIYQAFFAIKYPANLPLAGEPDGKRTFSWRTRWRYYTDCEALYKETYENYTKRGKTVLLPGLGFRHDIILPQSSMRDIMAHPEKELSHADAVLELVQLKYSLGHEKYKADPWPCMLVKSDINSKLEAVCDGMNEELKYAFDKYIGCDTESWKEIDLLETIRMVIIAAASRFTVGFPLCRNEAYLRACWKVNDGIMMNGGLTGATPRLLRPIFGPLITMNLRRNIEKIKKQVEPVYCQRVQALSQQNSAEKPDSEEPKDLFQQMLRYAQKERPRELHDLPSMSRRLAFANFAAVHQTTILVTNMILNIVSSDSQYNTISVLRDEVNDIIGPDSNTKWTKYKVAQMIKSDSVARETMRLHSNTNRGVFRKVLVEGIKTEDGIELPKGAYVSFLGRPLQCNPETFEDPFKYDPFRFSRVREKAPRDAKATSNLSFVSTSPEHLPFGHGGHSCPGRFLVDFEVKMIVAYLLMNYDVEFPAEYNGQRPASRWMAEALMPPSGARIRIKRRS</sequence>
<reference key="1">
    <citation type="journal article" date="2015" name="Genome Announc.">
        <title>Draft genome sequence of the fungus Penicillium brasilianum MG11.</title>
        <authorList>
            <person name="Horn F."/>
            <person name="Linde J."/>
            <person name="Mattern D.J."/>
            <person name="Walther G."/>
            <person name="Guthke R."/>
            <person name="Brakhage A.A."/>
            <person name="Valiante V."/>
        </authorList>
    </citation>
    <scope>NUCLEOTIDE SEQUENCE [LARGE SCALE GENOMIC DNA]</scope>
    <source>
        <strain>MG11</strain>
    </source>
</reference>
<reference key="2">
    <citation type="journal article" date="2024" name="J. Agric. Food Chem.">
        <title>Yeast synthesis and herbicidal activity evaluation of aspterric acid.</title>
        <authorList>
            <person name="Zhou Z."/>
            <person name="Zhang Y."/>
            <person name="Wu Q."/>
            <person name="Hou X."/>
            <person name="Zhang B."/>
        </authorList>
    </citation>
    <scope>FUNCTION</scope>
    <scope>PATHWAY</scope>
    <scope>BIOTECHNOLOGY</scope>
</reference>
<dbReference type="EC" id="1.-.-.-" evidence="7"/>
<dbReference type="EMBL" id="CDHK01000010">
    <property type="protein sequence ID" value="CEJ61176.1"/>
    <property type="molecule type" value="Genomic_DNA"/>
</dbReference>
<dbReference type="EMBL" id="CDHK01000010">
    <property type="protein sequence ID" value="CEJ61177.1"/>
    <property type="status" value="ALT_SEQ"/>
    <property type="molecule type" value="Genomic_DNA"/>
</dbReference>
<dbReference type="STRING" id="104259.A0A0F7TZ11"/>
<dbReference type="OrthoDB" id="1351063at2759"/>
<dbReference type="UniPathway" id="UPA00213"/>
<dbReference type="Proteomes" id="UP000042958">
    <property type="component" value="Unassembled WGS sequence"/>
</dbReference>
<dbReference type="GO" id="GO:0016020">
    <property type="term" value="C:membrane"/>
    <property type="evidence" value="ECO:0007669"/>
    <property type="project" value="UniProtKB-SubCell"/>
</dbReference>
<dbReference type="GO" id="GO:0020037">
    <property type="term" value="F:heme binding"/>
    <property type="evidence" value="ECO:0007669"/>
    <property type="project" value="InterPro"/>
</dbReference>
<dbReference type="GO" id="GO:0005506">
    <property type="term" value="F:iron ion binding"/>
    <property type="evidence" value="ECO:0007669"/>
    <property type="project" value="InterPro"/>
</dbReference>
<dbReference type="GO" id="GO:0004497">
    <property type="term" value="F:monooxygenase activity"/>
    <property type="evidence" value="ECO:0007669"/>
    <property type="project" value="UniProtKB-KW"/>
</dbReference>
<dbReference type="GO" id="GO:0016705">
    <property type="term" value="F:oxidoreductase activity, acting on paired donors, with incorporation or reduction of molecular oxygen"/>
    <property type="evidence" value="ECO:0007669"/>
    <property type="project" value="InterPro"/>
</dbReference>
<dbReference type="GO" id="GO:0043386">
    <property type="term" value="P:mycotoxin biosynthetic process"/>
    <property type="evidence" value="ECO:0007669"/>
    <property type="project" value="UniProtKB-ARBA"/>
</dbReference>
<dbReference type="CDD" id="cd11041">
    <property type="entry name" value="CYP503A1-like"/>
    <property type="match status" value="1"/>
</dbReference>
<dbReference type="Gene3D" id="1.10.630.10">
    <property type="entry name" value="Cytochrome P450"/>
    <property type="match status" value="1"/>
</dbReference>
<dbReference type="InterPro" id="IPR001128">
    <property type="entry name" value="Cyt_P450"/>
</dbReference>
<dbReference type="InterPro" id="IPR017972">
    <property type="entry name" value="Cyt_P450_CS"/>
</dbReference>
<dbReference type="InterPro" id="IPR002403">
    <property type="entry name" value="Cyt_P450_E_grp-IV"/>
</dbReference>
<dbReference type="InterPro" id="IPR036396">
    <property type="entry name" value="Cyt_P450_sf"/>
</dbReference>
<dbReference type="PANTHER" id="PTHR46206">
    <property type="entry name" value="CYTOCHROME P450"/>
    <property type="match status" value="1"/>
</dbReference>
<dbReference type="PANTHER" id="PTHR46206:SF1">
    <property type="entry name" value="P450, PUTATIVE (EUROFUNG)-RELATED"/>
    <property type="match status" value="1"/>
</dbReference>
<dbReference type="Pfam" id="PF00067">
    <property type="entry name" value="p450"/>
    <property type="match status" value="1"/>
</dbReference>
<dbReference type="PRINTS" id="PR00465">
    <property type="entry name" value="EP450IV"/>
</dbReference>
<dbReference type="SUPFAM" id="SSF48264">
    <property type="entry name" value="Cytochrome P450"/>
    <property type="match status" value="1"/>
</dbReference>
<dbReference type="PROSITE" id="PS00086">
    <property type="entry name" value="CYTOCHROME_P450"/>
    <property type="match status" value="1"/>
</dbReference>
<proteinExistence type="evidence at protein level"/>
<feature type="chain" id="PRO_0000462100" description="Cytochrome P450 monooxygenase pbrC">
    <location>
        <begin position="1"/>
        <end position="536"/>
    </location>
</feature>
<feature type="transmembrane region" description="Helical" evidence="3">
    <location>
        <begin position="20"/>
        <end position="39"/>
    </location>
</feature>
<feature type="binding site" description="axial binding residue" evidence="1">
    <location>
        <position position="479"/>
    </location>
    <ligand>
        <name>heme</name>
        <dbReference type="ChEBI" id="CHEBI:30413"/>
    </ligand>
    <ligandPart>
        <name>Fe</name>
        <dbReference type="ChEBI" id="CHEBI:18248"/>
    </ligandPart>
</feature>
<evidence type="ECO:0000250" key="1">
    <source>
        <dbReference type="UniProtKB" id="P04798"/>
    </source>
</evidence>
<evidence type="ECO:0000250" key="2">
    <source>
        <dbReference type="UniProtKB" id="Q0CPG6"/>
    </source>
</evidence>
<evidence type="ECO:0000255" key="3"/>
<evidence type="ECO:0000269" key="4">
    <source>
    </source>
</evidence>
<evidence type="ECO:0000303" key="5">
    <source>
    </source>
</evidence>
<evidence type="ECO:0000305" key="6"/>
<evidence type="ECO:0000305" key="7">
    <source>
    </source>
</evidence>
<comment type="function">
    <text evidence="2 4">Cytochrome P450 monooxygenase; part of the gene cluster that mediates the biosynthesis of the sesquiterpenoid aspterric acid (AA), an inhibitor of dihydroxy-acid dehydratase (DHAD) effective as an herbicide (PubMed:39511739). PbrC catalyzes the third and last step within the pathway and converts the alpha-epoxy carboxylate intermediate produced by the cytochrome P450 monooxygenase pbrB from (-)daucane into the tricyclic aspterric acid (By similarity).</text>
</comment>
<comment type="cofactor">
    <cofactor evidence="1">
        <name>heme</name>
        <dbReference type="ChEBI" id="CHEBI:30413"/>
    </cofactor>
</comment>
<comment type="pathway">
    <text evidence="4">Secondary metabolite biosynthesis; terpenoid biosynthesis.</text>
</comment>
<comment type="subcellular location">
    <subcellularLocation>
        <location evidence="3">Membrane</location>
        <topology evidence="3">Single-pass membrane protein</topology>
    </subcellularLocation>
</comment>
<comment type="biotechnology">
    <text evidence="4">The fungal sesquiterpenoid aspterric acid (AA) is a submicromolar inhibitor of dihydroxy-acid dehydratase (DHAD) in plants and is effective as an herbicide in spray applications.</text>
</comment>
<comment type="similarity">
    <text evidence="6">Belongs to the cytochrome P450 family.</text>
</comment>
<comment type="sequence caution" evidence="6">
    <conflict type="erroneous gene model prediction">
        <sequence resource="EMBL-CDS" id="CEJ61177"/>
    </conflict>
</comment>
<name>PBRC_PENBI</name>
<protein>
    <recommendedName>
        <fullName evidence="5">Cytochrome P450 monooxygenase pbrC</fullName>
        <ecNumber evidence="7">1.-.-.-</ecNumber>
    </recommendedName>
    <alternativeName>
        <fullName evidence="5">Aspterric acid biosynthesis cluster protein C</fullName>
    </alternativeName>
</protein>
<keyword id="KW-0349">Heme</keyword>
<keyword id="KW-0408">Iron</keyword>
<keyword id="KW-0472">Membrane</keyword>
<keyword id="KW-0479">Metal-binding</keyword>
<keyword id="KW-0503">Monooxygenase</keyword>
<keyword id="KW-0560">Oxidoreductase</keyword>
<keyword id="KW-1185">Reference proteome</keyword>
<keyword id="KW-0812">Transmembrane</keyword>
<keyword id="KW-1133">Transmembrane helix</keyword>
<gene>
    <name evidence="5" type="primary">pbrC</name>
    <name type="ORF">PMG11_09716</name>
</gene>
<accession>A0A0F7TZ11</accession>
<accession>A0A0F7U1L8</accession>
<organism>
    <name type="scientific">Penicillium brasilianum</name>
    <dbReference type="NCBI Taxonomy" id="104259"/>
    <lineage>
        <taxon>Eukaryota</taxon>
        <taxon>Fungi</taxon>
        <taxon>Dikarya</taxon>
        <taxon>Ascomycota</taxon>
        <taxon>Pezizomycotina</taxon>
        <taxon>Eurotiomycetes</taxon>
        <taxon>Eurotiomycetidae</taxon>
        <taxon>Eurotiales</taxon>
        <taxon>Aspergillaceae</taxon>
        <taxon>Penicillium</taxon>
    </lineage>
</organism>